<name>MIAA_SYNS3</name>
<keyword id="KW-0067">ATP-binding</keyword>
<keyword id="KW-0460">Magnesium</keyword>
<keyword id="KW-0547">Nucleotide-binding</keyword>
<keyword id="KW-1185">Reference proteome</keyword>
<keyword id="KW-0808">Transferase</keyword>
<keyword id="KW-0819">tRNA processing</keyword>
<organism>
    <name type="scientific">Synechococcus sp. (strain CC9311)</name>
    <dbReference type="NCBI Taxonomy" id="64471"/>
    <lineage>
        <taxon>Bacteria</taxon>
        <taxon>Bacillati</taxon>
        <taxon>Cyanobacteriota</taxon>
        <taxon>Cyanophyceae</taxon>
        <taxon>Synechococcales</taxon>
        <taxon>Synechococcaceae</taxon>
        <taxon>Synechococcus</taxon>
    </lineage>
</organism>
<dbReference type="EC" id="2.5.1.75" evidence="1"/>
<dbReference type="EMBL" id="CP000435">
    <property type="protein sequence ID" value="ABI47681.1"/>
    <property type="molecule type" value="Genomic_DNA"/>
</dbReference>
<dbReference type="RefSeq" id="WP_011618078.1">
    <property type="nucleotide sequence ID" value="NC_008319.1"/>
</dbReference>
<dbReference type="SMR" id="Q0IDZ4"/>
<dbReference type="STRING" id="64471.sync_0091"/>
<dbReference type="KEGG" id="syg:sync_0091"/>
<dbReference type="eggNOG" id="COG0324">
    <property type="taxonomic scope" value="Bacteria"/>
</dbReference>
<dbReference type="HOGENOM" id="CLU_032616_0_1_3"/>
<dbReference type="OrthoDB" id="9776390at2"/>
<dbReference type="Proteomes" id="UP000001961">
    <property type="component" value="Chromosome"/>
</dbReference>
<dbReference type="GO" id="GO:0005524">
    <property type="term" value="F:ATP binding"/>
    <property type="evidence" value="ECO:0007669"/>
    <property type="project" value="UniProtKB-UniRule"/>
</dbReference>
<dbReference type="GO" id="GO:0052381">
    <property type="term" value="F:tRNA dimethylallyltransferase activity"/>
    <property type="evidence" value="ECO:0007669"/>
    <property type="project" value="UniProtKB-UniRule"/>
</dbReference>
<dbReference type="GO" id="GO:0006400">
    <property type="term" value="P:tRNA modification"/>
    <property type="evidence" value="ECO:0007669"/>
    <property type="project" value="TreeGrafter"/>
</dbReference>
<dbReference type="Gene3D" id="1.10.20.140">
    <property type="match status" value="1"/>
</dbReference>
<dbReference type="Gene3D" id="3.40.50.300">
    <property type="entry name" value="P-loop containing nucleotide triphosphate hydrolases"/>
    <property type="match status" value="1"/>
</dbReference>
<dbReference type="HAMAP" id="MF_00185">
    <property type="entry name" value="IPP_trans"/>
    <property type="match status" value="1"/>
</dbReference>
<dbReference type="InterPro" id="IPR039657">
    <property type="entry name" value="Dimethylallyltransferase"/>
</dbReference>
<dbReference type="InterPro" id="IPR018022">
    <property type="entry name" value="IPT"/>
</dbReference>
<dbReference type="InterPro" id="IPR027417">
    <property type="entry name" value="P-loop_NTPase"/>
</dbReference>
<dbReference type="NCBIfam" id="TIGR00174">
    <property type="entry name" value="miaA"/>
    <property type="match status" value="1"/>
</dbReference>
<dbReference type="PANTHER" id="PTHR11088">
    <property type="entry name" value="TRNA DIMETHYLALLYLTRANSFERASE"/>
    <property type="match status" value="1"/>
</dbReference>
<dbReference type="PANTHER" id="PTHR11088:SF60">
    <property type="entry name" value="TRNA DIMETHYLALLYLTRANSFERASE"/>
    <property type="match status" value="1"/>
</dbReference>
<dbReference type="Pfam" id="PF01715">
    <property type="entry name" value="IPPT"/>
    <property type="match status" value="1"/>
</dbReference>
<dbReference type="SUPFAM" id="SSF52540">
    <property type="entry name" value="P-loop containing nucleoside triphosphate hydrolases"/>
    <property type="match status" value="1"/>
</dbReference>
<comment type="function">
    <text evidence="1">Catalyzes the transfer of a dimethylallyl group onto the adenine at position 37 in tRNAs that read codons beginning with uridine, leading to the formation of N6-(dimethylallyl)adenosine (i(6)A).</text>
</comment>
<comment type="catalytic activity">
    <reaction evidence="1">
        <text>adenosine(37) in tRNA + dimethylallyl diphosphate = N(6)-dimethylallyladenosine(37) in tRNA + diphosphate</text>
        <dbReference type="Rhea" id="RHEA:26482"/>
        <dbReference type="Rhea" id="RHEA-COMP:10162"/>
        <dbReference type="Rhea" id="RHEA-COMP:10375"/>
        <dbReference type="ChEBI" id="CHEBI:33019"/>
        <dbReference type="ChEBI" id="CHEBI:57623"/>
        <dbReference type="ChEBI" id="CHEBI:74411"/>
        <dbReference type="ChEBI" id="CHEBI:74415"/>
        <dbReference type="EC" id="2.5.1.75"/>
    </reaction>
</comment>
<comment type="cofactor">
    <cofactor evidence="1">
        <name>Mg(2+)</name>
        <dbReference type="ChEBI" id="CHEBI:18420"/>
    </cofactor>
</comment>
<comment type="subunit">
    <text evidence="1">Monomer.</text>
</comment>
<comment type="similarity">
    <text evidence="1">Belongs to the IPP transferase family.</text>
</comment>
<feature type="chain" id="PRO_0000377344" description="tRNA dimethylallyltransferase">
    <location>
        <begin position="1"/>
        <end position="310"/>
    </location>
</feature>
<feature type="region of interest" description="Interaction with substrate tRNA" evidence="1">
    <location>
        <begin position="49"/>
        <end position="52"/>
    </location>
</feature>
<feature type="binding site" evidence="1">
    <location>
        <begin position="24"/>
        <end position="31"/>
    </location>
    <ligand>
        <name>ATP</name>
        <dbReference type="ChEBI" id="CHEBI:30616"/>
    </ligand>
</feature>
<feature type="binding site" evidence="1">
    <location>
        <begin position="26"/>
        <end position="31"/>
    </location>
    <ligand>
        <name>substrate</name>
    </ligand>
</feature>
<feature type="site" description="Interaction with substrate tRNA" evidence="1">
    <location>
        <position position="115"/>
    </location>
</feature>
<reference key="1">
    <citation type="journal article" date="2006" name="Proc. Natl. Acad. Sci. U.S.A.">
        <title>Genome sequence of Synechococcus CC9311: insights into adaptation to a coastal environment.</title>
        <authorList>
            <person name="Palenik B."/>
            <person name="Ren Q."/>
            <person name="Dupont C.L."/>
            <person name="Myers G.S."/>
            <person name="Heidelberg J.F."/>
            <person name="Badger J.H."/>
            <person name="Madupu R."/>
            <person name="Nelson W.C."/>
            <person name="Brinkac L.M."/>
            <person name="Dodson R.J."/>
            <person name="Durkin A.S."/>
            <person name="Daugherty S.C."/>
            <person name="Sullivan S.A."/>
            <person name="Khouri H."/>
            <person name="Mohamoud Y."/>
            <person name="Halpin R."/>
            <person name="Paulsen I.T."/>
        </authorList>
    </citation>
    <scope>NUCLEOTIDE SEQUENCE [LARGE SCALE GENOMIC DNA]</scope>
    <source>
        <strain>CC9311</strain>
    </source>
</reference>
<evidence type="ECO:0000255" key="1">
    <source>
        <dbReference type="HAMAP-Rule" id="MF_00185"/>
    </source>
</evidence>
<protein>
    <recommendedName>
        <fullName evidence="1">tRNA dimethylallyltransferase</fullName>
        <ecNumber evidence="1">2.5.1.75</ecNumber>
    </recommendedName>
    <alternativeName>
        <fullName evidence="1">Dimethylallyl diphosphate:tRNA dimethylallyltransferase</fullName>
        <shortName evidence="1">DMAPP:tRNA dimethylallyltransferase</shortName>
        <shortName evidence="1">DMATase</shortName>
    </alternativeName>
    <alternativeName>
        <fullName evidence="1">Isopentenyl-diphosphate:tRNA isopentenyltransferase</fullName>
        <shortName evidence="1">IPP transferase</shortName>
        <shortName evidence="1">IPPT</shortName>
        <shortName evidence="1">IPTase</shortName>
    </alternativeName>
</protein>
<proteinExistence type="inferred from homology"/>
<sequence length="310" mass="34056">MNQINSEFGPDAGAKAPLVVALVGPTASGKTALALELAEHFQLEILNIDSRQLYREMDIGTAKPTAEQQQRVTHHLLDLRSPDQPITLQEFQQEATAAVSQVLKERGVAFLAGGSGLYLKALTQGLQPPAVPPQAELRRQLSSLGQANCHQLLQQADPQAAAKIAPADAVRTQRALEVLYSSGKPMSAQQSTNPPPWRVLELGLNPMELRSRIAQRTLQIYQEGLLEETRQLSQRYGPDLPMLQTIGYGEALEVLQGGLSEAQAIATTTRRTQQFAKRQRTWFRRQHSPHWLTGQDALSEAIRLIEAGLG</sequence>
<accession>Q0IDZ4</accession>
<gene>
    <name evidence="1" type="primary">miaA</name>
    <name type="ordered locus">sync_0091</name>
</gene>